<protein>
    <recommendedName>
        <fullName>Putative uncharacterized protein DDB_G0284665</fullName>
    </recommendedName>
</protein>
<proteinExistence type="predicted"/>
<organism>
    <name type="scientific">Dictyostelium discoideum</name>
    <name type="common">Social amoeba</name>
    <dbReference type="NCBI Taxonomy" id="44689"/>
    <lineage>
        <taxon>Eukaryota</taxon>
        <taxon>Amoebozoa</taxon>
        <taxon>Evosea</taxon>
        <taxon>Eumycetozoa</taxon>
        <taxon>Dictyostelia</taxon>
        <taxon>Dictyosteliales</taxon>
        <taxon>Dictyosteliaceae</taxon>
        <taxon>Dictyostelium</taxon>
    </lineage>
</organism>
<accession>Q54PB1</accession>
<reference key="1">
    <citation type="journal article" date="2005" name="Nature">
        <title>The genome of the social amoeba Dictyostelium discoideum.</title>
        <authorList>
            <person name="Eichinger L."/>
            <person name="Pachebat J.A."/>
            <person name="Gloeckner G."/>
            <person name="Rajandream M.A."/>
            <person name="Sucgang R."/>
            <person name="Berriman M."/>
            <person name="Song J."/>
            <person name="Olsen R."/>
            <person name="Szafranski K."/>
            <person name="Xu Q."/>
            <person name="Tunggal B."/>
            <person name="Kummerfeld S."/>
            <person name="Madera M."/>
            <person name="Konfortov B.A."/>
            <person name="Rivero F."/>
            <person name="Bankier A.T."/>
            <person name="Lehmann R."/>
            <person name="Hamlin N."/>
            <person name="Davies R."/>
            <person name="Gaudet P."/>
            <person name="Fey P."/>
            <person name="Pilcher K."/>
            <person name="Chen G."/>
            <person name="Saunders D."/>
            <person name="Sodergren E.J."/>
            <person name="Davis P."/>
            <person name="Kerhornou A."/>
            <person name="Nie X."/>
            <person name="Hall N."/>
            <person name="Anjard C."/>
            <person name="Hemphill L."/>
            <person name="Bason N."/>
            <person name="Farbrother P."/>
            <person name="Desany B."/>
            <person name="Just E."/>
            <person name="Morio T."/>
            <person name="Rost R."/>
            <person name="Churcher C.M."/>
            <person name="Cooper J."/>
            <person name="Haydock S."/>
            <person name="van Driessche N."/>
            <person name="Cronin A."/>
            <person name="Goodhead I."/>
            <person name="Muzny D.M."/>
            <person name="Mourier T."/>
            <person name="Pain A."/>
            <person name="Lu M."/>
            <person name="Harper D."/>
            <person name="Lindsay R."/>
            <person name="Hauser H."/>
            <person name="James K.D."/>
            <person name="Quiles M."/>
            <person name="Madan Babu M."/>
            <person name="Saito T."/>
            <person name="Buchrieser C."/>
            <person name="Wardroper A."/>
            <person name="Felder M."/>
            <person name="Thangavelu M."/>
            <person name="Johnson D."/>
            <person name="Knights A."/>
            <person name="Loulseged H."/>
            <person name="Mungall K.L."/>
            <person name="Oliver K."/>
            <person name="Price C."/>
            <person name="Quail M.A."/>
            <person name="Urushihara H."/>
            <person name="Hernandez J."/>
            <person name="Rabbinowitsch E."/>
            <person name="Steffen D."/>
            <person name="Sanders M."/>
            <person name="Ma J."/>
            <person name="Kohara Y."/>
            <person name="Sharp S."/>
            <person name="Simmonds M.N."/>
            <person name="Spiegler S."/>
            <person name="Tivey A."/>
            <person name="Sugano S."/>
            <person name="White B."/>
            <person name="Walker D."/>
            <person name="Woodward J.R."/>
            <person name="Winckler T."/>
            <person name="Tanaka Y."/>
            <person name="Shaulsky G."/>
            <person name="Schleicher M."/>
            <person name="Weinstock G.M."/>
            <person name="Rosenthal A."/>
            <person name="Cox E.C."/>
            <person name="Chisholm R.L."/>
            <person name="Gibbs R.A."/>
            <person name="Loomis W.F."/>
            <person name="Platzer M."/>
            <person name="Kay R.R."/>
            <person name="Williams J.G."/>
            <person name="Dear P.H."/>
            <person name="Noegel A.A."/>
            <person name="Barrell B.G."/>
            <person name="Kuspa A."/>
        </authorList>
    </citation>
    <scope>NUCLEOTIDE SEQUENCE [LARGE SCALE GENOMIC DNA]</scope>
    <source>
        <strain>AX4</strain>
    </source>
</reference>
<name>Y6129_DICDI</name>
<feature type="chain" id="PRO_0000350783" description="Putative uncharacterized protein DDB_G0284665">
    <location>
        <begin position="1"/>
        <end position="56"/>
    </location>
</feature>
<feature type="transmembrane region" description="Helical" evidence="1">
    <location>
        <begin position="30"/>
        <end position="52"/>
    </location>
</feature>
<gene>
    <name type="ORF">DDB_G0284665</name>
</gene>
<comment type="subcellular location">
    <subcellularLocation>
        <location evidence="2">Membrane</location>
        <topology evidence="2">Single-pass membrane protein</topology>
    </subcellularLocation>
</comment>
<keyword id="KW-0472">Membrane</keyword>
<keyword id="KW-1185">Reference proteome</keyword>
<keyword id="KW-0812">Transmembrane</keyword>
<keyword id="KW-1133">Transmembrane helix</keyword>
<dbReference type="EMBL" id="AAFI02000070">
    <property type="protein sequence ID" value="EAL65102.1"/>
    <property type="molecule type" value="Genomic_DNA"/>
</dbReference>
<dbReference type="RefSeq" id="XP_638464.1">
    <property type="nucleotide sequence ID" value="XM_633372.1"/>
</dbReference>
<dbReference type="SMR" id="Q54PB1"/>
<dbReference type="PaxDb" id="44689-DDB0186129"/>
<dbReference type="EnsemblProtists" id="EAL65102">
    <property type="protein sequence ID" value="EAL65102"/>
    <property type="gene ID" value="DDB_G0284665"/>
</dbReference>
<dbReference type="GeneID" id="8624715"/>
<dbReference type="KEGG" id="ddi:DDB_G0284665"/>
<dbReference type="dictyBase" id="DDB_G0284665"/>
<dbReference type="VEuPathDB" id="AmoebaDB:DDB_G0284665"/>
<dbReference type="HOGENOM" id="CLU_3018287_0_0_1"/>
<dbReference type="InParanoid" id="Q54PB1"/>
<dbReference type="PRO" id="PR:Q54PB1"/>
<dbReference type="Proteomes" id="UP000002195">
    <property type="component" value="Chromosome 4"/>
</dbReference>
<dbReference type="GO" id="GO:0016020">
    <property type="term" value="C:membrane"/>
    <property type="evidence" value="ECO:0007669"/>
    <property type="project" value="UniProtKB-SubCell"/>
</dbReference>
<sequence length="56" mass="6422">MTEEVCLMNFKDNEHSVTLNDLKKVKEEAIKIGIICVIITWAIFSINHHHTISAKD</sequence>
<evidence type="ECO:0000255" key="1"/>
<evidence type="ECO:0000305" key="2"/>